<proteinExistence type="inferred from homology"/>
<reference key="1">
    <citation type="submission" date="2006-02" db="EMBL/GenBank/DDBJ databases">
        <title>Complete sequence of chromosome of Rhodoferax ferrireducens DSM 15236.</title>
        <authorList>
            <person name="Copeland A."/>
            <person name="Lucas S."/>
            <person name="Lapidus A."/>
            <person name="Barry K."/>
            <person name="Detter J.C."/>
            <person name="Glavina del Rio T."/>
            <person name="Hammon N."/>
            <person name="Israni S."/>
            <person name="Pitluck S."/>
            <person name="Brettin T."/>
            <person name="Bruce D."/>
            <person name="Han C."/>
            <person name="Tapia R."/>
            <person name="Gilna P."/>
            <person name="Kiss H."/>
            <person name="Schmutz J."/>
            <person name="Larimer F."/>
            <person name="Land M."/>
            <person name="Kyrpides N."/>
            <person name="Ivanova N."/>
            <person name="Richardson P."/>
        </authorList>
    </citation>
    <scope>NUCLEOTIDE SEQUENCE [LARGE SCALE GENOMIC DNA]</scope>
    <source>
        <strain>ATCC BAA-621 / DSM 15236 / T118</strain>
    </source>
</reference>
<name>GLUQ_ALBFT</name>
<keyword id="KW-0030">Aminoacyl-tRNA synthetase</keyword>
<keyword id="KW-0067">ATP-binding</keyword>
<keyword id="KW-0436">Ligase</keyword>
<keyword id="KW-0479">Metal-binding</keyword>
<keyword id="KW-0547">Nucleotide-binding</keyword>
<keyword id="KW-1185">Reference proteome</keyword>
<keyword id="KW-0862">Zinc</keyword>
<sequence>MVAQYIGRFSPSPTGPLHAGSLVAALASWLDARAHAGQWLVRIEDVDTPRCVAGMDRVILQQLAACGLHADQPPVWQSQRTGLYQQALDQLVVQGLAYPCACSRKDIETALSRLGQARARHGELVYPGTCRTGLHGRVGRAWRLRTDLFKQNKPLATVEYTQEATNLIACNIIHWTDRRLGAQQQDVPAQVGDFVLKRFDGCFTYQLAVVVDDAAQGITDVVRGEDLADNTARQILLQQYLGLPTPRYLHTPLVLGAHGEKLSKQNGAQALDTTEPLAALNHAARVLGLPACSGSVAGALEAWVEAWDA</sequence>
<comment type="function">
    <text evidence="1">Catalyzes the tRNA-independent activation of glutamate in presence of ATP and the subsequent transfer of glutamate onto a tRNA(Asp). Glutamate is transferred on the 2-amino-5-(4,5-dihydroxy-2-cyclopenten-1-yl) moiety of the queuosine in the wobble position of the QUC anticodon.</text>
</comment>
<comment type="cofactor">
    <cofactor evidence="1">
        <name>Zn(2+)</name>
        <dbReference type="ChEBI" id="CHEBI:29105"/>
    </cofactor>
    <text evidence="1">Binds 1 zinc ion per subunit.</text>
</comment>
<comment type="similarity">
    <text evidence="1">Belongs to the class-I aminoacyl-tRNA synthetase family. GluQ subfamily.</text>
</comment>
<organism>
    <name type="scientific">Albidiferax ferrireducens (strain ATCC BAA-621 / DSM 15236 / T118)</name>
    <name type="common">Rhodoferax ferrireducens</name>
    <dbReference type="NCBI Taxonomy" id="338969"/>
    <lineage>
        <taxon>Bacteria</taxon>
        <taxon>Pseudomonadati</taxon>
        <taxon>Pseudomonadota</taxon>
        <taxon>Betaproteobacteria</taxon>
        <taxon>Burkholderiales</taxon>
        <taxon>Comamonadaceae</taxon>
        <taxon>Rhodoferax</taxon>
    </lineage>
</organism>
<accession>Q21X72</accession>
<evidence type="ECO:0000255" key="1">
    <source>
        <dbReference type="HAMAP-Rule" id="MF_01428"/>
    </source>
</evidence>
<dbReference type="EC" id="6.1.1.-" evidence="1"/>
<dbReference type="EMBL" id="CP000267">
    <property type="protein sequence ID" value="ABD69631.1"/>
    <property type="molecule type" value="Genomic_DNA"/>
</dbReference>
<dbReference type="RefSeq" id="WP_011464199.1">
    <property type="nucleotide sequence ID" value="NC_007908.1"/>
</dbReference>
<dbReference type="SMR" id="Q21X72"/>
<dbReference type="STRING" id="338969.Rfer_1905"/>
<dbReference type="KEGG" id="rfr:Rfer_1905"/>
<dbReference type="eggNOG" id="COG0008">
    <property type="taxonomic scope" value="Bacteria"/>
</dbReference>
<dbReference type="HOGENOM" id="CLU_015768_0_1_4"/>
<dbReference type="OrthoDB" id="9807503at2"/>
<dbReference type="Proteomes" id="UP000008332">
    <property type="component" value="Chromosome"/>
</dbReference>
<dbReference type="GO" id="GO:0005829">
    <property type="term" value="C:cytosol"/>
    <property type="evidence" value="ECO:0007669"/>
    <property type="project" value="TreeGrafter"/>
</dbReference>
<dbReference type="GO" id="GO:0005524">
    <property type="term" value="F:ATP binding"/>
    <property type="evidence" value="ECO:0007669"/>
    <property type="project" value="UniProtKB-KW"/>
</dbReference>
<dbReference type="GO" id="GO:0004818">
    <property type="term" value="F:glutamate-tRNA ligase activity"/>
    <property type="evidence" value="ECO:0007669"/>
    <property type="project" value="TreeGrafter"/>
</dbReference>
<dbReference type="GO" id="GO:0008270">
    <property type="term" value="F:zinc ion binding"/>
    <property type="evidence" value="ECO:0007669"/>
    <property type="project" value="UniProtKB-UniRule"/>
</dbReference>
<dbReference type="GO" id="GO:0006424">
    <property type="term" value="P:glutamyl-tRNA aminoacylation"/>
    <property type="evidence" value="ECO:0007669"/>
    <property type="project" value="InterPro"/>
</dbReference>
<dbReference type="GO" id="GO:0006400">
    <property type="term" value="P:tRNA modification"/>
    <property type="evidence" value="ECO:0007669"/>
    <property type="project" value="InterPro"/>
</dbReference>
<dbReference type="Gene3D" id="3.40.50.620">
    <property type="entry name" value="HUPs"/>
    <property type="match status" value="1"/>
</dbReference>
<dbReference type="HAMAP" id="MF_01428">
    <property type="entry name" value="Glu_Q_tRNA_synth"/>
    <property type="match status" value="1"/>
</dbReference>
<dbReference type="InterPro" id="IPR022380">
    <property type="entry name" value="Glu-Q_tRNA(Asp)_Synthase"/>
</dbReference>
<dbReference type="InterPro" id="IPR000924">
    <property type="entry name" value="Glu/Gln-tRNA-synth"/>
</dbReference>
<dbReference type="InterPro" id="IPR020058">
    <property type="entry name" value="Glu/Gln-tRNA-synth_Ib_cat-dom"/>
</dbReference>
<dbReference type="InterPro" id="IPR049940">
    <property type="entry name" value="GluQ/Sye"/>
</dbReference>
<dbReference type="InterPro" id="IPR014729">
    <property type="entry name" value="Rossmann-like_a/b/a_fold"/>
</dbReference>
<dbReference type="NCBIfam" id="NF004313">
    <property type="entry name" value="PRK05710.1-2"/>
    <property type="match status" value="1"/>
</dbReference>
<dbReference type="NCBIfam" id="NF004315">
    <property type="entry name" value="PRK05710.1-4"/>
    <property type="match status" value="1"/>
</dbReference>
<dbReference type="NCBIfam" id="TIGR03838">
    <property type="entry name" value="queuosine_YadB"/>
    <property type="match status" value="1"/>
</dbReference>
<dbReference type="PANTHER" id="PTHR43311">
    <property type="entry name" value="GLUTAMATE--TRNA LIGASE"/>
    <property type="match status" value="1"/>
</dbReference>
<dbReference type="PANTHER" id="PTHR43311:SF1">
    <property type="entry name" value="GLUTAMYL-Q TRNA(ASP) SYNTHETASE"/>
    <property type="match status" value="1"/>
</dbReference>
<dbReference type="Pfam" id="PF00749">
    <property type="entry name" value="tRNA-synt_1c"/>
    <property type="match status" value="2"/>
</dbReference>
<dbReference type="PRINTS" id="PR00987">
    <property type="entry name" value="TRNASYNTHGLU"/>
</dbReference>
<dbReference type="SUPFAM" id="SSF52374">
    <property type="entry name" value="Nucleotidylyl transferase"/>
    <property type="match status" value="1"/>
</dbReference>
<feature type="chain" id="PRO_1000024366" description="Glutamyl-Q tRNA(Asp) synthetase">
    <location>
        <begin position="1"/>
        <end position="309"/>
    </location>
</feature>
<feature type="short sequence motif" description="'HIGH' region">
    <location>
        <begin position="11"/>
        <end position="21"/>
    </location>
</feature>
<feature type="short sequence motif" description="'KMSKS' region">
    <location>
        <begin position="261"/>
        <end position="265"/>
    </location>
</feature>
<feature type="binding site" evidence="1">
    <location>
        <begin position="8"/>
        <end position="12"/>
    </location>
    <ligand>
        <name>L-glutamate</name>
        <dbReference type="ChEBI" id="CHEBI:29985"/>
    </ligand>
</feature>
<feature type="binding site" evidence="1">
    <location>
        <position position="44"/>
    </location>
    <ligand>
        <name>L-glutamate</name>
        <dbReference type="ChEBI" id="CHEBI:29985"/>
    </ligand>
</feature>
<feature type="binding site" evidence="1">
    <location>
        <position position="100"/>
    </location>
    <ligand>
        <name>Zn(2+)</name>
        <dbReference type="ChEBI" id="CHEBI:29105"/>
    </ligand>
</feature>
<feature type="binding site" evidence="1">
    <location>
        <position position="102"/>
    </location>
    <ligand>
        <name>Zn(2+)</name>
        <dbReference type="ChEBI" id="CHEBI:29105"/>
    </ligand>
</feature>
<feature type="binding site" evidence="1">
    <location>
        <position position="126"/>
    </location>
    <ligand>
        <name>Zn(2+)</name>
        <dbReference type="ChEBI" id="CHEBI:29105"/>
    </ligand>
</feature>
<feature type="binding site" evidence="1">
    <location>
        <position position="130"/>
    </location>
    <ligand>
        <name>Zn(2+)</name>
        <dbReference type="ChEBI" id="CHEBI:29105"/>
    </ligand>
</feature>
<feature type="binding site" evidence="1">
    <location>
        <position position="205"/>
    </location>
    <ligand>
        <name>L-glutamate</name>
        <dbReference type="ChEBI" id="CHEBI:29985"/>
    </ligand>
</feature>
<feature type="binding site" evidence="1">
    <location>
        <position position="223"/>
    </location>
    <ligand>
        <name>L-glutamate</name>
        <dbReference type="ChEBI" id="CHEBI:29985"/>
    </ligand>
</feature>
<feature type="binding site" evidence="1">
    <location>
        <position position="264"/>
    </location>
    <ligand>
        <name>ATP</name>
        <dbReference type="ChEBI" id="CHEBI:30616"/>
    </ligand>
</feature>
<gene>
    <name evidence="1" type="primary">gluQ</name>
    <name type="ordered locus">Rfer_1905</name>
</gene>
<protein>
    <recommendedName>
        <fullName evidence="1">Glutamyl-Q tRNA(Asp) synthetase</fullName>
        <shortName evidence="1">Glu-Q-RSs</shortName>
        <ecNumber evidence="1">6.1.1.-</ecNumber>
    </recommendedName>
</protein>